<comment type="function">
    <text evidence="1">In the first step of glycine reductase, the substrate is bound to component PB via a Schiff base intermediate. Then the PB-activated substrate is nucleophilically attacked by the selenol anion of component PA to transform it to a carboxymethylated selenoether and the respective amine. By action of component PC, acetyl phosphate is formed, leaving component PA in its oxidized state. Finally component PA becomes reduced by the thioredoxin system to start a new catalytic cycle of reductive deamination (By similarity).</text>
</comment>
<comment type="catalytic activity">
    <reaction>
        <text>acetyl phosphate + [thioredoxin]-disulfide + NH4(+) + H2O = [thioredoxin]-dithiol + glycine + phosphate + H(+)</text>
        <dbReference type="Rhea" id="RHEA:12232"/>
        <dbReference type="Rhea" id="RHEA-COMP:10698"/>
        <dbReference type="Rhea" id="RHEA-COMP:10700"/>
        <dbReference type="ChEBI" id="CHEBI:15377"/>
        <dbReference type="ChEBI" id="CHEBI:15378"/>
        <dbReference type="ChEBI" id="CHEBI:22191"/>
        <dbReference type="ChEBI" id="CHEBI:28938"/>
        <dbReference type="ChEBI" id="CHEBI:29950"/>
        <dbReference type="ChEBI" id="CHEBI:43474"/>
        <dbReference type="ChEBI" id="CHEBI:50058"/>
        <dbReference type="ChEBI" id="CHEBI:57305"/>
        <dbReference type="EC" id="1.21.4.2"/>
    </reaction>
</comment>
<comment type="subunit">
    <text evidence="1">Heterohexamer of two alpha, two beta and two gamma subunits. Component of the glycine reductase complex, together with components A and C. PB is substrate specific (By similarity).</text>
</comment>
<comment type="similarity">
    <text evidence="2">Belongs to the GrdB/GrdF/GrdH family.</text>
</comment>
<sequence>MRIVHYLNQFFGGIGGEEHAGVRPEVRPGPVGPGMALKAALGDAGEIVATVICGDSWFNENLEEAKATVLALIRQQNPDLVVAGPAFNAGRYGMACGAVAEVVSKELGIPVVTGMFLENPGVEVYRRYAWVVETGNSAASMRTAIPAMAALIRRLAAGQEPEPGTYLERGLRVNTFAAERGSARAVEMLVRKLKGEPYTTEYPMPSFDRVPPNPPVKDLSKAKIALVTSGGIVPKGNPDHIESSSASKYGKYYLGDLDDLTAETHQTAHGGYDPTYANADADRVLPVDVMRELEREGVIGKLHDYWYATVGNGTSVANARAYAREIAEDLKKYEVDAVILTSTUGTCTRCGATMVKEIERAGIPVVHVCTVVPISLTVGANRIVPAVAIPHPLGNPALPPDEERTLRRRLVMKALQALTTPVDGQTVFE</sequence>
<organism>
    <name type="scientific">Symbiobacterium thermophilum (strain DSM 24528 / JCM 14929 / IAM 14863 / T)</name>
    <dbReference type="NCBI Taxonomy" id="292459"/>
    <lineage>
        <taxon>Bacteria</taxon>
        <taxon>Bacillati</taxon>
        <taxon>Bacillota</taxon>
        <taxon>Clostridia</taxon>
        <taxon>Eubacteriales</taxon>
        <taxon>Symbiobacteriaceae</taxon>
        <taxon>Symbiobacterium</taxon>
    </lineage>
</organism>
<gene>
    <name type="primary">grdB</name>
    <name type="ordered locus">STH2867</name>
</gene>
<name>GRDB_SYMTH</name>
<evidence type="ECO:0000250" key="1"/>
<evidence type="ECO:0000305" key="2"/>
<reference key="1">
    <citation type="journal article" date="2004" name="Nucleic Acids Res.">
        <title>Genome sequence of Symbiobacterium thermophilum, an uncultivable bacterium that depends on microbial commensalism.</title>
        <authorList>
            <person name="Ueda K."/>
            <person name="Yamashita A."/>
            <person name="Ishikawa J."/>
            <person name="Shimada M."/>
            <person name="Watsuji T."/>
            <person name="Morimura K."/>
            <person name="Ikeda H."/>
            <person name="Hattori M."/>
            <person name="Beppu T."/>
        </authorList>
    </citation>
    <scope>NUCLEOTIDE SEQUENCE [LARGE SCALE GENOMIC DNA]</scope>
    <source>
        <strain>DSM 24528 / JCM 14929 / IAM 14863 / T</strain>
    </source>
</reference>
<keyword id="KW-0560">Oxidoreductase</keyword>
<keyword id="KW-1185">Reference proteome</keyword>
<keyword id="KW-0712">Selenocysteine</keyword>
<feature type="chain" id="PRO_0000318649" description="Glycine reductase complex component B subunit gamma">
    <location>
        <begin position="1"/>
        <end position="429"/>
    </location>
</feature>
<feature type="active site">
    <location>
        <position position="344"/>
    </location>
</feature>
<feature type="non-standard amino acid" description="Selenocysteine">
    <location>
        <position position="344"/>
    </location>
</feature>
<dbReference type="EC" id="1.21.4.2"/>
<dbReference type="EMBL" id="AP006840">
    <property type="protein sequence ID" value="BAD41851.1"/>
    <property type="molecule type" value="Genomic_DNA"/>
</dbReference>
<dbReference type="RefSeq" id="WP_011196985.1">
    <property type="nucleotide sequence ID" value="NC_006177.1"/>
</dbReference>
<dbReference type="STRING" id="292459.STH2867"/>
<dbReference type="KEGG" id="sth:STH2867"/>
<dbReference type="eggNOG" id="COG1978">
    <property type="taxonomic scope" value="Bacteria"/>
</dbReference>
<dbReference type="HOGENOM" id="CLU_053106_0_0_9"/>
<dbReference type="OrthoDB" id="9764267at2"/>
<dbReference type="Proteomes" id="UP000000417">
    <property type="component" value="Chromosome"/>
</dbReference>
<dbReference type="GO" id="GO:0030700">
    <property type="term" value="C:glycine reductase complex"/>
    <property type="evidence" value="ECO:0007669"/>
    <property type="project" value="InterPro"/>
</dbReference>
<dbReference type="GO" id="GO:0030699">
    <property type="term" value="F:glycine reductase activity"/>
    <property type="evidence" value="ECO:0007669"/>
    <property type="project" value="UniProtKB-EC"/>
</dbReference>
<dbReference type="InterPro" id="IPR010186">
    <property type="entry name" value="Gly_red_sel_B"/>
</dbReference>
<dbReference type="InterPro" id="IPR010187">
    <property type="entry name" value="Various_sel_PB"/>
</dbReference>
<dbReference type="NCBIfam" id="TIGR01917">
    <property type="entry name" value="gly_red_sel_B"/>
    <property type="match status" value="1"/>
</dbReference>
<dbReference type="NCBIfam" id="TIGR01918">
    <property type="entry name" value="various_sel_PB"/>
    <property type="match status" value="1"/>
</dbReference>
<dbReference type="Pfam" id="PF07355">
    <property type="entry name" value="GRDB"/>
    <property type="match status" value="1"/>
</dbReference>
<protein>
    <recommendedName>
        <fullName>Glycine reductase complex component B subunit gamma</fullName>
        <ecNumber>1.21.4.2</ecNumber>
    </recommendedName>
    <alternativeName>
        <fullName>Selenoprotein PB gamma</fullName>
    </alternativeName>
</protein>
<proteinExistence type="inferred from homology"/>
<accession>Q67KE7</accession>